<organism>
    <name type="scientific">Flavobacterium psychrophilum (strain ATCC 49511 / DSM 21280 / CIP 103535 / JIP02/86)</name>
    <dbReference type="NCBI Taxonomy" id="402612"/>
    <lineage>
        <taxon>Bacteria</taxon>
        <taxon>Pseudomonadati</taxon>
        <taxon>Bacteroidota</taxon>
        <taxon>Flavobacteriia</taxon>
        <taxon>Flavobacteriales</taxon>
        <taxon>Flavobacteriaceae</taxon>
        <taxon>Flavobacterium</taxon>
    </lineage>
</organism>
<feature type="chain" id="PRO_1000058826" description="Adenylate kinase">
    <location>
        <begin position="1"/>
        <end position="190"/>
    </location>
</feature>
<feature type="region of interest" description="NMP" evidence="1">
    <location>
        <begin position="31"/>
        <end position="60"/>
    </location>
</feature>
<feature type="region of interest" description="LID" evidence="1">
    <location>
        <begin position="127"/>
        <end position="137"/>
    </location>
</feature>
<feature type="binding site" evidence="1">
    <location>
        <begin position="11"/>
        <end position="16"/>
    </location>
    <ligand>
        <name>ATP</name>
        <dbReference type="ChEBI" id="CHEBI:30616"/>
    </ligand>
</feature>
<feature type="binding site" evidence="1">
    <location>
        <position position="32"/>
    </location>
    <ligand>
        <name>AMP</name>
        <dbReference type="ChEBI" id="CHEBI:456215"/>
    </ligand>
</feature>
<feature type="binding site" evidence="1">
    <location>
        <position position="37"/>
    </location>
    <ligand>
        <name>AMP</name>
        <dbReference type="ChEBI" id="CHEBI:456215"/>
    </ligand>
</feature>
<feature type="binding site" evidence="1">
    <location>
        <begin position="58"/>
        <end position="60"/>
    </location>
    <ligand>
        <name>AMP</name>
        <dbReference type="ChEBI" id="CHEBI:456215"/>
    </ligand>
</feature>
<feature type="binding site" evidence="1">
    <location>
        <begin position="86"/>
        <end position="89"/>
    </location>
    <ligand>
        <name>AMP</name>
        <dbReference type="ChEBI" id="CHEBI:456215"/>
    </ligand>
</feature>
<feature type="binding site" evidence="1">
    <location>
        <position position="93"/>
    </location>
    <ligand>
        <name>AMP</name>
        <dbReference type="ChEBI" id="CHEBI:456215"/>
    </ligand>
</feature>
<feature type="binding site" evidence="1">
    <location>
        <position position="128"/>
    </location>
    <ligand>
        <name>ATP</name>
        <dbReference type="ChEBI" id="CHEBI:30616"/>
    </ligand>
</feature>
<feature type="binding site" evidence="1">
    <location>
        <position position="134"/>
    </location>
    <ligand>
        <name>AMP</name>
        <dbReference type="ChEBI" id="CHEBI:456215"/>
    </ligand>
</feature>
<feature type="binding site" evidence="1">
    <location>
        <position position="146"/>
    </location>
    <ligand>
        <name>AMP</name>
        <dbReference type="ChEBI" id="CHEBI:456215"/>
    </ligand>
</feature>
<feature type="binding site" evidence="1">
    <location>
        <position position="174"/>
    </location>
    <ligand>
        <name>ATP</name>
        <dbReference type="ChEBI" id="CHEBI:30616"/>
    </ligand>
</feature>
<keyword id="KW-0067">ATP-binding</keyword>
<keyword id="KW-0963">Cytoplasm</keyword>
<keyword id="KW-0418">Kinase</keyword>
<keyword id="KW-0545">Nucleotide biosynthesis</keyword>
<keyword id="KW-0547">Nucleotide-binding</keyword>
<keyword id="KW-1185">Reference proteome</keyword>
<keyword id="KW-0808">Transferase</keyword>
<accession>A6GZB9</accession>
<reference key="1">
    <citation type="journal article" date="2007" name="Nat. Biotechnol.">
        <title>Complete genome sequence of the fish pathogen Flavobacterium psychrophilum.</title>
        <authorList>
            <person name="Duchaud E."/>
            <person name="Boussaha M."/>
            <person name="Loux V."/>
            <person name="Bernardet J.-F."/>
            <person name="Michel C."/>
            <person name="Kerouault B."/>
            <person name="Mondot S."/>
            <person name="Nicolas P."/>
            <person name="Bossy R."/>
            <person name="Caron C."/>
            <person name="Bessieres P."/>
            <person name="Gibrat J.-F."/>
            <person name="Claverol S."/>
            <person name="Dumetz F."/>
            <person name="Le Henaff M."/>
            <person name="Benmansour A."/>
        </authorList>
    </citation>
    <scope>NUCLEOTIDE SEQUENCE [LARGE SCALE GENOMIC DNA]</scope>
    <source>
        <strain>ATCC 49511 / DSM 21280 / CIP 103535 / JIP02/86</strain>
    </source>
</reference>
<name>KAD_FLAPJ</name>
<evidence type="ECO:0000255" key="1">
    <source>
        <dbReference type="HAMAP-Rule" id="MF_00235"/>
    </source>
</evidence>
<comment type="function">
    <text evidence="1">Catalyzes the reversible transfer of the terminal phosphate group between ATP and AMP. Plays an important role in cellular energy homeostasis and in adenine nucleotide metabolism.</text>
</comment>
<comment type="catalytic activity">
    <reaction evidence="1">
        <text>AMP + ATP = 2 ADP</text>
        <dbReference type="Rhea" id="RHEA:12973"/>
        <dbReference type="ChEBI" id="CHEBI:30616"/>
        <dbReference type="ChEBI" id="CHEBI:456215"/>
        <dbReference type="ChEBI" id="CHEBI:456216"/>
        <dbReference type="EC" id="2.7.4.3"/>
    </reaction>
</comment>
<comment type="pathway">
    <text evidence="1">Purine metabolism; AMP biosynthesis via salvage pathway; AMP from ADP: step 1/1.</text>
</comment>
<comment type="subunit">
    <text evidence="1">Monomer.</text>
</comment>
<comment type="subcellular location">
    <subcellularLocation>
        <location evidence="1">Cytoplasm</location>
    </subcellularLocation>
</comment>
<comment type="domain">
    <text evidence="1">Consists of three domains, a large central CORE domain and two small peripheral domains, NMPbind and LID, which undergo movements during catalysis. The LID domain closes over the site of phosphoryl transfer upon ATP binding. Assembling and dissambling the active center during each catalytic cycle provides an effective means to prevent ATP hydrolysis.</text>
</comment>
<comment type="similarity">
    <text evidence="1">Belongs to the adenylate kinase family.</text>
</comment>
<protein>
    <recommendedName>
        <fullName evidence="1">Adenylate kinase</fullName>
        <shortName evidence="1">AK</shortName>
        <ecNumber evidence="1">2.7.4.3</ecNumber>
    </recommendedName>
    <alternativeName>
        <fullName evidence="1">ATP-AMP transphosphorylase</fullName>
    </alternativeName>
    <alternativeName>
        <fullName evidence="1">ATP:AMP phosphotransferase</fullName>
    </alternativeName>
    <alternativeName>
        <fullName evidence="1">Adenylate monophosphate kinase</fullName>
    </alternativeName>
</protein>
<dbReference type="EC" id="2.7.4.3" evidence="1"/>
<dbReference type="EMBL" id="AM398681">
    <property type="protein sequence ID" value="CAL43442.1"/>
    <property type="molecule type" value="Genomic_DNA"/>
</dbReference>
<dbReference type="RefSeq" id="WP_011963489.1">
    <property type="nucleotide sequence ID" value="NC_009613.3"/>
</dbReference>
<dbReference type="RefSeq" id="YP_001296253.1">
    <property type="nucleotide sequence ID" value="NC_009613.3"/>
</dbReference>
<dbReference type="SMR" id="A6GZB9"/>
<dbReference type="STRING" id="402612.FP1359"/>
<dbReference type="EnsemblBacteria" id="CAL43442">
    <property type="protein sequence ID" value="CAL43442"/>
    <property type="gene ID" value="FP1359"/>
</dbReference>
<dbReference type="KEGG" id="fps:FP1359"/>
<dbReference type="PATRIC" id="fig|402612.5.peg.1376"/>
<dbReference type="eggNOG" id="COG0563">
    <property type="taxonomic scope" value="Bacteria"/>
</dbReference>
<dbReference type="HOGENOM" id="CLU_032354_4_1_10"/>
<dbReference type="OrthoDB" id="9805030at2"/>
<dbReference type="UniPathway" id="UPA00588">
    <property type="reaction ID" value="UER00649"/>
</dbReference>
<dbReference type="Proteomes" id="UP000006394">
    <property type="component" value="Chromosome"/>
</dbReference>
<dbReference type="GO" id="GO:0005737">
    <property type="term" value="C:cytoplasm"/>
    <property type="evidence" value="ECO:0007669"/>
    <property type="project" value="UniProtKB-SubCell"/>
</dbReference>
<dbReference type="GO" id="GO:0004017">
    <property type="term" value="F:adenylate kinase activity"/>
    <property type="evidence" value="ECO:0007669"/>
    <property type="project" value="UniProtKB-UniRule"/>
</dbReference>
<dbReference type="GO" id="GO:0005524">
    <property type="term" value="F:ATP binding"/>
    <property type="evidence" value="ECO:0007669"/>
    <property type="project" value="UniProtKB-UniRule"/>
</dbReference>
<dbReference type="GO" id="GO:0044209">
    <property type="term" value="P:AMP salvage"/>
    <property type="evidence" value="ECO:0007669"/>
    <property type="project" value="UniProtKB-UniRule"/>
</dbReference>
<dbReference type="CDD" id="cd01428">
    <property type="entry name" value="ADK"/>
    <property type="match status" value="1"/>
</dbReference>
<dbReference type="Gene3D" id="3.40.50.300">
    <property type="entry name" value="P-loop containing nucleotide triphosphate hydrolases"/>
    <property type="match status" value="1"/>
</dbReference>
<dbReference type="HAMAP" id="MF_00235">
    <property type="entry name" value="Adenylate_kinase_Adk"/>
    <property type="match status" value="1"/>
</dbReference>
<dbReference type="InterPro" id="IPR000850">
    <property type="entry name" value="Adenylat/UMP-CMP_kin"/>
</dbReference>
<dbReference type="InterPro" id="IPR033690">
    <property type="entry name" value="Adenylat_kinase_CS"/>
</dbReference>
<dbReference type="InterPro" id="IPR027417">
    <property type="entry name" value="P-loop_NTPase"/>
</dbReference>
<dbReference type="NCBIfam" id="NF001381">
    <property type="entry name" value="PRK00279.1-3"/>
    <property type="match status" value="1"/>
</dbReference>
<dbReference type="NCBIfam" id="NF011100">
    <property type="entry name" value="PRK14527.1"/>
    <property type="match status" value="1"/>
</dbReference>
<dbReference type="NCBIfam" id="NF011101">
    <property type="entry name" value="PRK14528.1"/>
    <property type="match status" value="1"/>
</dbReference>
<dbReference type="NCBIfam" id="NF011104">
    <property type="entry name" value="PRK14531.1"/>
    <property type="match status" value="1"/>
</dbReference>
<dbReference type="NCBIfam" id="NF011105">
    <property type="entry name" value="PRK14532.1"/>
    <property type="match status" value="1"/>
</dbReference>
<dbReference type="PANTHER" id="PTHR23359">
    <property type="entry name" value="NUCLEOTIDE KINASE"/>
    <property type="match status" value="1"/>
</dbReference>
<dbReference type="Pfam" id="PF00406">
    <property type="entry name" value="ADK"/>
    <property type="match status" value="1"/>
</dbReference>
<dbReference type="PRINTS" id="PR00094">
    <property type="entry name" value="ADENYLTKNASE"/>
</dbReference>
<dbReference type="SUPFAM" id="SSF52540">
    <property type="entry name" value="P-loop containing nucleoside triphosphate hydrolases"/>
    <property type="match status" value="1"/>
</dbReference>
<dbReference type="PROSITE" id="PS00113">
    <property type="entry name" value="ADENYLATE_KINASE"/>
    <property type="match status" value="1"/>
</dbReference>
<sequence>MINIVLFGKPGAGKGTQAEFLKEKYNLTHLSTGDIFRFNIKNETELGKLAKTFMDKGDLVPDAVTIKMLESEVDKNQHSKGFLFDGFPRTLAQAAALDTFLASKDQEVTATIALEADDEILVQRLLERGKTSGRVDDQDEEKIRNRYQEYNEKTAPLMSYYKNNKKFHAVNGIGTIQEITKRLSEVINNL</sequence>
<gene>
    <name evidence="1" type="primary">adk</name>
    <name type="ordered locus">FP1359</name>
</gene>
<proteinExistence type="inferred from homology"/>